<evidence type="ECO:0000255" key="1">
    <source>
        <dbReference type="HAMAP-Rule" id="MF_00087"/>
    </source>
</evidence>
<protein>
    <recommendedName>
        <fullName evidence="1">Glutamyl-tRNA reductase</fullName>
        <shortName evidence="1">GluTR</shortName>
        <ecNumber evidence="1">1.2.1.70</ecNumber>
    </recommendedName>
</protein>
<feature type="chain" id="PRO_1000004648" description="Glutamyl-tRNA reductase">
    <location>
        <begin position="1"/>
        <end position="447"/>
    </location>
</feature>
<feature type="active site" description="Nucleophile" evidence="1">
    <location>
        <position position="50"/>
    </location>
</feature>
<feature type="binding site" evidence="1">
    <location>
        <begin position="49"/>
        <end position="52"/>
    </location>
    <ligand>
        <name>substrate</name>
    </ligand>
</feature>
<feature type="binding site" evidence="1">
    <location>
        <position position="109"/>
    </location>
    <ligand>
        <name>substrate</name>
    </ligand>
</feature>
<feature type="binding site" evidence="1">
    <location>
        <begin position="114"/>
        <end position="116"/>
    </location>
    <ligand>
        <name>substrate</name>
    </ligand>
</feature>
<feature type="binding site" evidence="1">
    <location>
        <position position="120"/>
    </location>
    <ligand>
        <name>substrate</name>
    </ligand>
</feature>
<feature type="binding site" evidence="1">
    <location>
        <begin position="189"/>
        <end position="194"/>
    </location>
    <ligand>
        <name>NADP(+)</name>
        <dbReference type="ChEBI" id="CHEBI:58349"/>
    </ligand>
</feature>
<feature type="site" description="Important for activity" evidence="1">
    <location>
        <position position="99"/>
    </location>
</feature>
<keyword id="KW-0521">NADP</keyword>
<keyword id="KW-0560">Oxidoreductase</keyword>
<keyword id="KW-0627">Porphyrin biosynthesis</keyword>
<organism>
    <name type="scientific">Mycobacterium sp. (strain JLS)</name>
    <dbReference type="NCBI Taxonomy" id="164757"/>
    <lineage>
        <taxon>Bacteria</taxon>
        <taxon>Bacillati</taxon>
        <taxon>Actinomycetota</taxon>
        <taxon>Actinomycetes</taxon>
        <taxon>Mycobacteriales</taxon>
        <taxon>Mycobacteriaceae</taxon>
        <taxon>Mycobacterium</taxon>
    </lineage>
</organism>
<comment type="function">
    <text evidence="1">Catalyzes the NADPH-dependent reduction of glutamyl-tRNA(Glu) to glutamate 1-semialdehyde (GSA).</text>
</comment>
<comment type="catalytic activity">
    <reaction evidence="1">
        <text>(S)-4-amino-5-oxopentanoate + tRNA(Glu) + NADP(+) = L-glutamyl-tRNA(Glu) + NADPH + H(+)</text>
        <dbReference type="Rhea" id="RHEA:12344"/>
        <dbReference type="Rhea" id="RHEA-COMP:9663"/>
        <dbReference type="Rhea" id="RHEA-COMP:9680"/>
        <dbReference type="ChEBI" id="CHEBI:15378"/>
        <dbReference type="ChEBI" id="CHEBI:57501"/>
        <dbReference type="ChEBI" id="CHEBI:57783"/>
        <dbReference type="ChEBI" id="CHEBI:58349"/>
        <dbReference type="ChEBI" id="CHEBI:78442"/>
        <dbReference type="ChEBI" id="CHEBI:78520"/>
        <dbReference type="EC" id="1.2.1.70"/>
    </reaction>
</comment>
<comment type="pathway">
    <text evidence="1">Porphyrin-containing compound metabolism; protoporphyrin-IX biosynthesis; 5-aminolevulinate from L-glutamyl-tRNA(Glu): step 1/2.</text>
</comment>
<comment type="subunit">
    <text evidence="1">Homodimer.</text>
</comment>
<comment type="domain">
    <text evidence="1">Possesses an unusual extended V-shaped dimeric structure with each monomer consisting of three distinct domains arranged along a curved 'spinal' alpha-helix. The N-terminal catalytic domain specifically recognizes the glutamate moiety of the substrate. The second domain is the NADPH-binding domain, and the third C-terminal domain is responsible for dimerization.</text>
</comment>
<comment type="miscellaneous">
    <text evidence="1">During catalysis, the active site Cys acts as a nucleophile attacking the alpha-carbonyl group of tRNA-bound glutamate with the formation of a thioester intermediate between enzyme and glutamate, and the concomitant release of tRNA(Glu). The thioester intermediate is finally reduced by direct hydride transfer from NADPH, to form the product GSA.</text>
</comment>
<comment type="similarity">
    <text evidence="1">Belongs to the glutamyl-tRNA reductase family.</text>
</comment>
<dbReference type="EC" id="1.2.1.70" evidence="1"/>
<dbReference type="EMBL" id="CP000580">
    <property type="protein sequence ID" value="ABN96480.1"/>
    <property type="molecule type" value="Genomic_DNA"/>
</dbReference>
<dbReference type="SMR" id="A3PUA3"/>
<dbReference type="KEGG" id="mjl:Mjls_0669"/>
<dbReference type="HOGENOM" id="CLU_035113_4_0_11"/>
<dbReference type="BioCyc" id="MSP164757:G1G8C-676-MONOMER"/>
<dbReference type="UniPathway" id="UPA00251">
    <property type="reaction ID" value="UER00316"/>
</dbReference>
<dbReference type="GO" id="GO:0008883">
    <property type="term" value="F:glutamyl-tRNA reductase activity"/>
    <property type="evidence" value="ECO:0007669"/>
    <property type="project" value="UniProtKB-UniRule"/>
</dbReference>
<dbReference type="GO" id="GO:0050661">
    <property type="term" value="F:NADP binding"/>
    <property type="evidence" value="ECO:0007669"/>
    <property type="project" value="InterPro"/>
</dbReference>
<dbReference type="GO" id="GO:0019353">
    <property type="term" value="P:protoporphyrinogen IX biosynthetic process from glutamate"/>
    <property type="evidence" value="ECO:0007669"/>
    <property type="project" value="TreeGrafter"/>
</dbReference>
<dbReference type="CDD" id="cd05213">
    <property type="entry name" value="NAD_bind_Glutamyl_tRNA_reduct"/>
    <property type="match status" value="1"/>
</dbReference>
<dbReference type="FunFam" id="3.30.460.30:FF:000001">
    <property type="entry name" value="Glutamyl-tRNA reductase"/>
    <property type="match status" value="1"/>
</dbReference>
<dbReference type="Gene3D" id="3.30.460.30">
    <property type="entry name" value="Glutamyl-tRNA reductase, N-terminal domain"/>
    <property type="match status" value="1"/>
</dbReference>
<dbReference type="Gene3D" id="3.40.50.720">
    <property type="entry name" value="NAD(P)-binding Rossmann-like Domain"/>
    <property type="match status" value="1"/>
</dbReference>
<dbReference type="HAMAP" id="MF_00087">
    <property type="entry name" value="Glu_tRNA_reductase"/>
    <property type="match status" value="1"/>
</dbReference>
<dbReference type="InterPro" id="IPR000343">
    <property type="entry name" value="4pyrrol_synth_GluRdtase"/>
</dbReference>
<dbReference type="InterPro" id="IPR015896">
    <property type="entry name" value="4pyrrol_synth_GluRdtase_dimer"/>
</dbReference>
<dbReference type="InterPro" id="IPR015895">
    <property type="entry name" value="4pyrrol_synth_GluRdtase_N"/>
</dbReference>
<dbReference type="InterPro" id="IPR018214">
    <property type="entry name" value="GluRdtase_CS"/>
</dbReference>
<dbReference type="InterPro" id="IPR036453">
    <property type="entry name" value="GluRdtase_dimer_dom_sf"/>
</dbReference>
<dbReference type="InterPro" id="IPR036343">
    <property type="entry name" value="GluRdtase_N_sf"/>
</dbReference>
<dbReference type="InterPro" id="IPR036291">
    <property type="entry name" value="NAD(P)-bd_dom_sf"/>
</dbReference>
<dbReference type="InterPro" id="IPR006151">
    <property type="entry name" value="Shikm_DH/Glu-tRNA_Rdtase"/>
</dbReference>
<dbReference type="NCBIfam" id="TIGR01035">
    <property type="entry name" value="hemA"/>
    <property type="match status" value="1"/>
</dbReference>
<dbReference type="NCBIfam" id="NF000744">
    <property type="entry name" value="PRK00045.1-3"/>
    <property type="match status" value="1"/>
</dbReference>
<dbReference type="PANTHER" id="PTHR43013">
    <property type="entry name" value="GLUTAMYL-TRNA REDUCTASE"/>
    <property type="match status" value="1"/>
</dbReference>
<dbReference type="PANTHER" id="PTHR43013:SF1">
    <property type="entry name" value="GLUTAMYL-TRNA REDUCTASE"/>
    <property type="match status" value="1"/>
</dbReference>
<dbReference type="Pfam" id="PF00745">
    <property type="entry name" value="GlutR_dimer"/>
    <property type="match status" value="1"/>
</dbReference>
<dbReference type="Pfam" id="PF05201">
    <property type="entry name" value="GlutR_N"/>
    <property type="match status" value="1"/>
</dbReference>
<dbReference type="Pfam" id="PF01488">
    <property type="entry name" value="Shikimate_DH"/>
    <property type="match status" value="1"/>
</dbReference>
<dbReference type="PIRSF" id="PIRSF000445">
    <property type="entry name" value="4pyrrol_synth_GluRdtase"/>
    <property type="match status" value="1"/>
</dbReference>
<dbReference type="SUPFAM" id="SSF69742">
    <property type="entry name" value="Glutamyl tRNA-reductase catalytic, N-terminal domain"/>
    <property type="match status" value="1"/>
</dbReference>
<dbReference type="SUPFAM" id="SSF69075">
    <property type="entry name" value="Glutamyl tRNA-reductase dimerization domain"/>
    <property type="match status" value="1"/>
</dbReference>
<dbReference type="SUPFAM" id="SSF51735">
    <property type="entry name" value="NAD(P)-binding Rossmann-fold domains"/>
    <property type="match status" value="1"/>
</dbReference>
<dbReference type="PROSITE" id="PS00747">
    <property type="entry name" value="GLUTR"/>
    <property type="match status" value="1"/>
</dbReference>
<accession>A3PUA3</accession>
<proteinExistence type="inferred from homology"/>
<name>HEM1_MYCSJ</name>
<reference key="1">
    <citation type="submission" date="2007-02" db="EMBL/GenBank/DDBJ databases">
        <title>Complete sequence of Mycobacterium sp. JLS.</title>
        <authorList>
            <consortium name="US DOE Joint Genome Institute"/>
            <person name="Copeland A."/>
            <person name="Lucas S."/>
            <person name="Lapidus A."/>
            <person name="Barry K."/>
            <person name="Detter J.C."/>
            <person name="Glavina del Rio T."/>
            <person name="Hammon N."/>
            <person name="Israni S."/>
            <person name="Dalin E."/>
            <person name="Tice H."/>
            <person name="Pitluck S."/>
            <person name="Chain P."/>
            <person name="Malfatti S."/>
            <person name="Shin M."/>
            <person name="Vergez L."/>
            <person name="Schmutz J."/>
            <person name="Larimer F."/>
            <person name="Land M."/>
            <person name="Hauser L."/>
            <person name="Kyrpides N."/>
            <person name="Mikhailova N."/>
            <person name="Miller C.D."/>
            <person name="Anderson A.J."/>
            <person name="Sims R.C."/>
            <person name="Richardson P."/>
        </authorList>
    </citation>
    <scope>NUCLEOTIDE SEQUENCE [LARGE SCALE GENOMIC DNA]</scope>
    <source>
        <strain>JLS</strain>
    </source>
</reference>
<sequence length="447" mass="47273">MSVLLFGVSHRSAPVSVLEQLSTDESDQAKIVDQVLQSSLVTEAMVLSTCNRVEVYAVVDAFHGGLSVIGQVLAEHCGMSLNDLTKYAYVRYAEAAVEHLFAVASGLDSAVIGEQQVLGQVRRAYTSAEANHTVGRTLHELSQRALSVGKRVHSETGIDAAGASVVSVALDIAEAKLGSLAGRTAVVIGAGSMGALSAKHLVRAGIERVHVVNRSLPRARRLAQSLLDQGVTADAHTLDDIAHALADADVVITSTGAVRPVVSLADAHRGLTGRPEHRRLVICDLGMPRDVEPAIAGLPGVNVIDMERIQREPSARAAASDADAARSIVAAEVANYLAGQRMAEVTPTVTALRQRAADVVEAELLRLDNRLPELDAAHRAEVAKTVRRVVDKLLHAPTVRVKQLASAPGGDSYAEALRELFELDQQAVDAVAAGELPLLPIELDKSE</sequence>
<gene>
    <name evidence="1" type="primary">hemA</name>
    <name type="ordered locus">Mjls_0669</name>
</gene>